<feature type="chain" id="PRO_0000086862" description="Na(+)/H(+) antiporter subunit G1">
    <location>
        <begin position="1"/>
        <end position="118"/>
    </location>
</feature>
<feature type="transmembrane region" description="Helical" evidence="2">
    <location>
        <begin position="7"/>
        <end position="29"/>
    </location>
</feature>
<feature type="transmembrane region" description="Helical" evidence="2">
    <location>
        <begin position="44"/>
        <end position="66"/>
    </location>
</feature>
<feature type="transmembrane region" description="Helical" evidence="2">
    <location>
        <begin position="71"/>
        <end position="90"/>
    </location>
</feature>
<keyword id="KW-0050">Antiport</keyword>
<keyword id="KW-1003">Cell membrane</keyword>
<keyword id="KW-0375">Hydrogen ion transport</keyword>
<keyword id="KW-0406">Ion transport</keyword>
<keyword id="KW-0472">Membrane</keyword>
<keyword id="KW-0915">Sodium</keyword>
<keyword id="KW-0739">Sodium transport</keyword>
<keyword id="KW-0812">Transmembrane</keyword>
<keyword id="KW-1133">Transmembrane helix</keyword>
<keyword id="KW-0813">Transport</keyword>
<name>MNHG1_STAAW</name>
<organism>
    <name type="scientific">Staphylococcus aureus (strain MW2)</name>
    <dbReference type="NCBI Taxonomy" id="196620"/>
    <lineage>
        <taxon>Bacteria</taxon>
        <taxon>Bacillati</taxon>
        <taxon>Bacillota</taxon>
        <taxon>Bacilli</taxon>
        <taxon>Bacillales</taxon>
        <taxon>Staphylococcaceae</taxon>
        <taxon>Staphylococcus</taxon>
    </lineage>
</organism>
<gene>
    <name type="primary">mnhG1</name>
    <name type="ordered locus">MW0828</name>
</gene>
<dbReference type="EMBL" id="BA000033">
    <property type="protein sequence ID" value="BAB94693.1"/>
    <property type="molecule type" value="Genomic_DNA"/>
</dbReference>
<dbReference type="PIR" id="C89861">
    <property type="entry name" value="C89861"/>
</dbReference>
<dbReference type="RefSeq" id="WP_000590451.1">
    <property type="nucleotide sequence ID" value="NC_003923.1"/>
</dbReference>
<dbReference type="SMR" id="P60699"/>
<dbReference type="GeneID" id="98345267"/>
<dbReference type="KEGG" id="sam:MW0828"/>
<dbReference type="HOGENOM" id="CLU_121334_0_3_9"/>
<dbReference type="GO" id="GO:0005886">
    <property type="term" value="C:plasma membrane"/>
    <property type="evidence" value="ECO:0007669"/>
    <property type="project" value="UniProtKB-SubCell"/>
</dbReference>
<dbReference type="GO" id="GO:0015385">
    <property type="term" value="F:sodium:proton antiporter activity"/>
    <property type="evidence" value="ECO:0007669"/>
    <property type="project" value="TreeGrafter"/>
</dbReference>
<dbReference type="InterPro" id="IPR005133">
    <property type="entry name" value="PhaG_MnhG_YufB"/>
</dbReference>
<dbReference type="NCBIfam" id="TIGR01300">
    <property type="entry name" value="CPA3_mnhG_phaG"/>
    <property type="match status" value="1"/>
</dbReference>
<dbReference type="NCBIfam" id="NF009237">
    <property type="entry name" value="PRK12587.1"/>
    <property type="match status" value="1"/>
</dbReference>
<dbReference type="NCBIfam" id="NF009314">
    <property type="entry name" value="PRK12674.1-2"/>
    <property type="match status" value="1"/>
</dbReference>
<dbReference type="PANTHER" id="PTHR34703">
    <property type="entry name" value="ANTIPORTER SUBUNIT MNHG2-RELATED"/>
    <property type="match status" value="1"/>
</dbReference>
<dbReference type="PANTHER" id="PTHR34703:SF1">
    <property type="entry name" value="ANTIPORTER SUBUNIT MNHG2-RELATED"/>
    <property type="match status" value="1"/>
</dbReference>
<dbReference type="Pfam" id="PF03334">
    <property type="entry name" value="PhaG_MnhG_YufB"/>
    <property type="match status" value="1"/>
</dbReference>
<evidence type="ECO:0000250" key="1"/>
<evidence type="ECO:0000255" key="2"/>
<evidence type="ECO:0000305" key="3"/>
<sequence>MIKIILISLALIFVIIGALISALAAIGLLRLEDVYSRAHAAGKASTLGAMSLLFGTFLYFIATQGFVNMQLIVAIIFVLITGPLSSHMIMKAAYNIKTPYTKKTKVDEISEDLKDTKL</sequence>
<comment type="function">
    <text evidence="1">Mnh complex is a Na(+)/H(+) antiporter involved in Na(+) excretion.</text>
</comment>
<comment type="subunit">
    <text evidence="1">May form a heterooligomeric complex that consists of seven subunits: mnhA1, mnhB1, mnhC1, mnhD1, mnhE1, mnhF1 and mnhG1.</text>
</comment>
<comment type="subcellular location">
    <subcellularLocation>
        <location evidence="3">Cell membrane</location>
        <topology evidence="3">Multi-pass membrane protein</topology>
    </subcellularLocation>
</comment>
<comment type="similarity">
    <text evidence="3">Belongs to the CPA3 antiporters (TC 2.A.63) subunit G family.</text>
</comment>
<proteinExistence type="inferred from homology"/>
<reference key="1">
    <citation type="journal article" date="2002" name="Lancet">
        <title>Genome and virulence determinants of high virulence community-acquired MRSA.</title>
        <authorList>
            <person name="Baba T."/>
            <person name="Takeuchi F."/>
            <person name="Kuroda M."/>
            <person name="Yuzawa H."/>
            <person name="Aoki K."/>
            <person name="Oguchi A."/>
            <person name="Nagai Y."/>
            <person name="Iwama N."/>
            <person name="Asano K."/>
            <person name="Naimi T."/>
            <person name="Kuroda H."/>
            <person name="Cui L."/>
            <person name="Yamamoto K."/>
            <person name="Hiramatsu K."/>
        </authorList>
    </citation>
    <scope>NUCLEOTIDE SEQUENCE [LARGE SCALE GENOMIC DNA]</scope>
    <source>
        <strain>MW2</strain>
    </source>
</reference>
<protein>
    <recommendedName>
        <fullName>Na(+)/H(+) antiporter subunit G1</fullName>
    </recommendedName>
    <alternativeName>
        <fullName>Mnh complex subunit G1</fullName>
    </alternativeName>
</protein>
<accession>P60699</accession>
<accession>Q9ZNG0</accession>